<proteinExistence type="inferred from homology"/>
<protein>
    <recommendedName>
        <fullName evidence="1">Sec-independent protein translocase protein TatA</fullName>
    </recommendedName>
</protein>
<reference key="1">
    <citation type="journal article" date="2004" name="Proc. Natl. Acad. Sci. U.S.A.">
        <title>The complete genomic sequence of Nocardia farcinica IFM 10152.</title>
        <authorList>
            <person name="Ishikawa J."/>
            <person name="Yamashita A."/>
            <person name="Mikami Y."/>
            <person name="Hoshino Y."/>
            <person name="Kurita H."/>
            <person name="Hotta K."/>
            <person name="Shiba T."/>
            <person name="Hattori M."/>
        </authorList>
    </citation>
    <scope>NUCLEOTIDE SEQUENCE [LARGE SCALE GENOMIC DNA]</scope>
    <source>
        <strain>IFM 10152</strain>
    </source>
</reference>
<name>TATA_NOCFA</name>
<evidence type="ECO:0000255" key="1">
    <source>
        <dbReference type="HAMAP-Rule" id="MF_00236"/>
    </source>
</evidence>
<evidence type="ECO:0000256" key="2">
    <source>
        <dbReference type="SAM" id="MobiDB-lite"/>
    </source>
</evidence>
<gene>
    <name evidence="1" type="primary">tatA</name>
    <name type="ordered locus">NFA_31640</name>
</gene>
<comment type="function">
    <text evidence="1">Part of the twin-arginine translocation (Tat) system that transports large folded proteins containing a characteristic twin-arginine motif in their signal peptide across membranes. TatA could form the protein-conducting channel of the Tat system.</text>
</comment>
<comment type="subunit">
    <text evidence="1">The Tat system comprises two distinct complexes: a TatABC complex, containing multiple copies of TatA, TatB and TatC subunits, and a separate TatA complex, containing only TatA subunits. Substrates initially bind to the TatABC complex, which probably triggers association of the separate TatA complex to form the active translocon.</text>
</comment>
<comment type="subcellular location">
    <subcellularLocation>
        <location evidence="1">Cell membrane</location>
        <topology evidence="1">Single-pass membrane protein</topology>
    </subcellularLocation>
</comment>
<comment type="similarity">
    <text evidence="1">Belongs to the TatA/E family.</text>
</comment>
<organism>
    <name type="scientific">Nocardia farcinica (strain IFM 10152)</name>
    <dbReference type="NCBI Taxonomy" id="247156"/>
    <lineage>
        <taxon>Bacteria</taxon>
        <taxon>Bacillati</taxon>
        <taxon>Actinomycetota</taxon>
        <taxon>Actinomycetes</taxon>
        <taxon>Mycobacteriales</taxon>
        <taxon>Nocardiaceae</taxon>
        <taxon>Nocardia</taxon>
    </lineage>
</organism>
<keyword id="KW-1003">Cell membrane</keyword>
<keyword id="KW-0472">Membrane</keyword>
<keyword id="KW-0653">Protein transport</keyword>
<keyword id="KW-1185">Reference proteome</keyword>
<keyword id="KW-0811">Translocation</keyword>
<keyword id="KW-0812">Transmembrane</keyword>
<keyword id="KW-1133">Transmembrane helix</keyword>
<keyword id="KW-0813">Transport</keyword>
<sequence>MSGTFSWTHLLIIALLFVVLFGAKRLPDAARGLGRSLRIFKSEVNQMQHETPQANAAPVQQPAQQLPPAQPAQAPAQPVNQAEQKSA</sequence>
<accession>Q5YUY0</accession>
<feature type="chain" id="PRO_0000336634" description="Sec-independent protein translocase protein TatA">
    <location>
        <begin position="1"/>
        <end position="87"/>
    </location>
</feature>
<feature type="transmembrane region" description="Helical" evidence="1">
    <location>
        <begin position="3"/>
        <end position="23"/>
    </location>
</feature>
<feature type="region of interest" description="Disordered" evidence="2">
    <location>
        <begin position="47"/>
        <end position="87"/>
    </location>
</feature>
<feature type="compositionally biased region" description="Low complexity" evidence="2">
    <location>
        <begin position="52"/>
        <end position="87"/>
    </location>
</feature>
<dbReference type="EMBL" id="AP006618">
    <property type="protein sequence ID" value="BAD58011.1"/>
    <property type="molecule type" value="Genomic_DNA"/>
</dbReference>
<dbReference type="RefSeq" id="WP_011209696.1">
    <property type="nucleotide sequence ID" value="NC_006361.1"/>
</dbReference>
<dbReference type="SMR" id="Q5YUY0"/>
<dbReference type="STRING" id="247156.NFA_31640"/>
<dbReference type="GeneID" id="61133878"/>
<dbReference type="KEGG" id="nfa:NFA_31640"/>
<dbReference type="eggNOG" id="COG1826">
    <property type="taxonomic scope" value="Bacteria"/>
</dbReference>
<dbReference type="HOGENOM" id="CLU_086034_4_0_11"/>
<dbReference type="OrthoDB" id="5245163at2"/>
<dbReference type="Proteomes" id="UP000006820">
    <property type="component" value="Chromosome"/>
</dbReference>
<dbReference type="GO" id="GO:0033281">
    <property type="term" value="C:TAT protein transport complex"/>
    <property type="evidence" value="ECO:0007669"/>
    <property type="project" value="UniProtKB-UniRule"/>
</dbReference>
<dbReference type="GO" id="GO:0008320">
    <property type="term" value="F:protein transmembrane transporter activity"/>
    <property type="evidence" value="ECO:0007669"/>
    <property type="project" value="UniProtKB-UniRule"/>
</dbReference>
<dbReference type="GO" id="GO:0043953">
    <property type="term" value="P:protein transport by the Tat complex"/>
    <property type="evidence" value="ECO:0007669"/>
    <property type="project" value="UniProtKB-UniRule"/>
</dbReference>
<dbReference type="Gene3D" id="1.20.5.3310">
    <property type="match status" value="1"/>
</dbReference>
<dbReference type="HAMAP" id="MF_00236">
    <property type="entry name" value="TatA_E"/>
    <property type="match status" value="1"/>
</dbReference>
<dbReference type="InterPro" id="IPR003369">
    <property type="entry name" value="TatA/B/E"/>
</dbReference>
<dbReference type="InterPro" id="IPR006312">
    <property type="entry name" value="TatA/E"/>
</dbReference>
<dbReference type="NCBIfam" id="NF001854">
    <property type="entry name" value="PRK00575.1"/>
    <property type="match status" value="1"/>
</dbReference>
<dbReference type="NCBIfam" id="TIGR01411">
    <property type="entry name" value="tatAE"/>
    <property type="match status" value="1"/>
</dbReference>
<dbReference type="PANTHER" id="PTHR42982">
    <property type="entry name" value="SEC-INDEPENDENT PROTEIN TRANSLOCASE PROTEIN TATA"/>
    <property type="match status" value="1"/>
</dbReference>
<dbReference type="PANTHER" id="PTHR42982:SF8">
    <property type="entry name" value="SEC-INDEPENDENT PROTEIN TRANSLOCASE PROTEIN TATA"/>
    <property type="match status" value="1"/>
</dbReference>
<dbReference type="Pfam" id="PF02416">
    <property type="entry name" value="TatA_B_E"/>
    <property type="match status" value="1"/>
</dbReference>